<name>PUR7_CHLPB</name>
<comment type="catalytic activity">
    <reaction evidence="1">
        <text>5-amino-1-(5-phospho-D-ribosyl)imidazole-4-carboxylate + L-aspartate + ATP = (2S)-2-[5-amino-1-(5-phospho-beta-D-ribosyl)imidazole-4-carboxamido]succinate + ADP + phosphate + 2 H(+)</text>
        <dbReference type="Rhea" id="RHEA:22628"/>
        <dbReference type="ChEBI" id="CHEBI:15378"/>
        <dbReference type="ChEBI" id="CHEBI:29991"/>
        <dbReference type="ChEBI" id="CHEBI:30616"/>
        <dbReference type="ChEBI" id="CHEBI:43474"/>
        <dbReference type="ChEBI" id="CHEBI:58443"/>
        <dbReference type="ChEBI" id="CHEBI:77657"/>
        <dbReference type="ChEBI" id="CHEBI:456216"/>
        <dbReference type="EC" id="6.3.2.6"/>
    </reaction>
</comment>
<comment type="pathway">
    <text evidence="1">Purine metabolism; IMP biosynthesis via de novo pathway; 5-amino-1-(5-phospho-D-ribosyl)imidazole-4-carboxamide from 5-amino-1-(5-phospho-D-ribosyl)imidazole-4-carboxylate: step 1/2.</text>
</comment>
<comment type="similarity">
    <text evidence="1">Belongs to the SAICAR synthetase family.</text>
</comment>
<dbReference type="EC" id="6.3.2.6" evidence="1"/>
<dbReference type="EMBL" id="CP001101">
    <property type="protein sequence ID" value="ACE04043.1"/>
    <property type="molecule type" value="Genomic_DNA"/>
</dbReference>
<dbReference type="SMR" id="B3EQL0"/>
<dbReference type="STRING" id="331678.Cphamn1_1105"/>
<dbReference type="KEGG" id="cpb:Cphamn1_1105"/>
<dbReference type="eggNOG" id="COG0152">
    <property type="taxonomic scope" value="Bacteria"/>
</dbReference>
<dbReference type="HOGENOM" id="CLU_061495_2_0_10"/>
<dbReference type="OrthoDB" id="9801549at2"/>
<dbReference type="UniPathway" id="UPA00074">
    <property type="reaction ID" value="UER00131"/>
</dbReference>
<dbReference type="GO" id="GO:0005524">
    <property type="term" value="F:ATP binding"/>
    <property type="evidence" value="ECO:0007669"/>
    <property type="project" value="UniProtKB-KW"/>
</dbReference>
<dbReference type="GO" id="GO:0004639">
    <property type="term" value="F:phosphoribosylaminoimidazolesuccinocarboxamide synthase activity"/>
    <property type="evidence" value="ECO:0007669"/>
    <property type="project" value="UniProtKB-UniRule"/>
</dbReference>
<dbReference type="GO" id="GO:0006189">
    <property type="term" value="P:'de novo' IMP biosynthetic process"/>
    <property type="evidence" value="ECO:0007669"/>
    <property type="project" value="UniProtKB-UniRule"/>
</dbReference>
<dbReference type="GO" id="GO:0009236">
    <property type="term" value="P:cobalamin biosynthetic process"/>
    <property type="evidence" value="ECO:0007669"/>
    <property type="project" value="InterPro"/>
</dbReference>
<dbReference type="CDD" id="cd01415">
    <property type="entry name" value="SAICAR_synt_PurC"/>
    <property type="match status" value="1"/>
</dbReference>
<dbReference type="FunFam" id="3.30.470.20:FF:000006">
    <property type="entry name" value="Phosphoribosylaminoimidazole-succinocarboxamide synthase"/>
    <property type="match status" value="1"/>
</dbReference>
<dbReference type="Gene3D" id="3.30.470.20">
    <property type="entry name" value="ATP-grasp fold, B domain"/>
    <property type="match status" value="1"/>
</dbReference>
<dbReference type="Gene3D" id="3.30.200.20">
    <property type="entry name" value="Phosphorylase Kinase, domain 1"/>
    <property type="match status" value="1"/>
</dbReference>
<dbReference type="HAMAP" id="MF_00137">
    <property type="entry name" value="SAICAR_synth"/>
    <property type="match status" value="1"/>
</dbReference>
<dbReference type="InterPro" id="IPR028923">
    <property type="entry name" value="SAICAR_synt/ADE2_N"/>
</dbReference>
<dbReference type="InterPro" id="IPR033934">
    <property type="entry name" value="SAICAR_synt_PurC"/>
</dbReference>
<dbReference type="InterPro" id="IPR001636">
    <property type="entry name" value="SAICAR_synth"/>
</dbReference>
<dbReference type="InterPro" id="IPR050089">
    <property type="entry name" value="SAICAR_synthetase"/>
</dbReference>
<dbReference type="InterPro" id="IPR018236">
    <property type="entry name" value="SAICAR_synthetase_CS"/>
</dbReference>
<dbReference type="NCBIfam" id="TIGR00081">
    <property type="entry name" value="purC"/>
    <property type="match status" value="1"/>
</dbReference>
<dbReference type="PANTHER" id="PTHR43599">
    <property type="entry name" value="MULTIFUNCTIONAL PROTEIN ADE2"/>
    <property type="match status" value="1"/>
</dbReference>
<dbReference type="PANTHER" id="PTHR43599:SF3">
    <property type="entry name" value="SI:DKEY-6E2.2"/>
    <property type="match status" value="1"/>
</dbReference>
<dbReference type="Pfam" id="PF01259">
    <property type="entry name" value="SAICAR_synt"/>
    <property type="match status" value="1"/>
</dbReference>
<dbReference type="SUPFAM" id="SSF56104">
    <property type="entry name" value="SAICAR synthase-like"/>
    <property type="match status" value="1"/>
</dbReference>
<dbReference type="PROSITE" id="PS01057">
    <property type="entry name" value="SAICAR_SYNTHETASE_1"/>
    <property type="match status" value="1"/>
</dbReference>
<dbReference type="PROSITE" id="PS01058">
    <property type="entry name" value="SAICAR_SYNTHETASE_2"/>
    <property type="match status" value="1"/>
</dbReference>
<proteinExistence type="inferred from homology"/>
<gene>
    <name evidence="1" type="primary">purC</name>
    <name type="ordered locus">Cphamn1_1105</name>
</gene>
<reference key="1">
    <citation type="submission" date="2008-06" db="EMBL/GenBank/DDBJ databases">
        <title>Complete sequence of Chlorobium phaeobacteroides BS1.</title>
        <authorList>
            <consortium name="US DOE Joint Genome Institute"/>
            <person name="Lucas S."/>
            <person name="Copeland A."/>
            <person name="Lapidus A."/>
            <person name="Glavina del Rio T."/>
            <person name="Dalin E."/>
            <person name="Tice H."/>
            <person name="Bruce D."/>
            <person name="Goodwin L."/>
            <person name="Pitluck S."/>
            <person name="Schmutz J."/>
            <person name="Larimer F."/>
            <person name="Land M."/>
            <person name="Hauser L."/>
            <person name="Kyrpides N."/>
            <person name="Ovchinnikova G."/>
            <person name="Li T."/>
            <person name="Liu Z."/>
            <person name="Zhao F."/>
            <person name="Overmann J."/>
            <person name="Bryant D.A."/>
            <person name="Richardson P."/>
        </authorList>
    </citation>
    <scope>NUCLEOTIDE SEQUENCE [LARGE SCALE GENOMIC DNA]</scope>
    <source>
        <strain>BS1</strain>
    </source>
</reference>
<accession>B3EQL0</accession>
<keyword id="KW-0067">ATP-binding</keyword>
<keyword id="KW-0436">Ligase</keyword>
<keyword id="KW-0547">Nucleotide-binding</keyword>
<keyword id="KW-0658">Purine biosynthesis</keyword>
<evidence type="ECO:0000255" key="1">
    <source>
        <dbReference type="HAMAP-Rule" id="MF_00137"/>
    </source>
</evidence>
<sequence>MNKTELLHEGKAKKVFLTDNKDLVIQEFKDDATAFNNKKKGTIGNKGVVNNAISCKLFTYLAEHGVSTHFVEKLSDRDMLCKRLDIILVEVVVRNTAAGSLVRRYGFEEGFRLEDPIIELYLKDDDLDDPLMNESHAVALGLANYEELELLKEQAATINTLLKTFFAGRKLNLVDFKLEFGRHNGEILLGDEISPDTCRFWDLDTGEKMDKDRFRFDLGGVEDAYTEVQHRVLDLP</sequence>
<protein>
    <recommendedName>
        <fullName evidence="1">Phosphoribosylaminoimidazole-succinocarboxamide synthase</fullName>
        <ecNumber evidence="1">6.3.2.6</ecNumber>
    </recommendedName>
    <alternativeName>
        <fullName evidence="1">SAICAR synthetase</fullName>
    </alternativeName>
</protein>
<feature type="chain" id="PRO_1000095971" description="Phosphoribosylaminoimidazole-succinocarboxamide synthase">
    <location>
        <begin position="1"/>
        <end position="236"/>
    </location>
</feature>
<organism>
    <name type="scientific">Chlorobium phaeobacteroides (strain BS1)</name>
    <dbReference type="NCBI Taxonomy" id="331678"/>
    <lineage>
        <taxon>Bacteria</taxon>
        <taxon>Pseudomonadati</taxon>
        <taxon>Chlorobiota</taxon>
        <taxon>Chlorobiia</taxon>
        <taxon>Chlorobiales</taxon>
        <taxon>Chlorobiaceae</taxon>
        <taxon>Chlorobium/Pelodictyon group</taxon>
        <taxon>Chlorobium</taxon>
    </lineage>
</organism>